<name>ACTP3_ACTEQ</name>
<proteinExistence type="evidence at protein level"/>
<organism>
    <name type="scientific">Actinia equina</name>
    <name type="common">Beadlet anemone</name>
    <dbReference type="NCBI Taxonomy" id="6106"/>
    <lineage>
        <taxon>Eukaryota</taxon>
        <taxon>Metazoa</taxon>
        <taxon>Cnidaria</taxon>
        <taxon>Anthozoa</taxon>
        <taxon>Hexacorallia</taxon>
        <taxon>Actiniaria</taxon>
        <taxon>Actiniidae</taxon>
        <taxon>Actinia</taxon>
    </lineage>
</organism>
<comment type="function">
    <text evidence="2">Pore-forming protein that forms cations-selective hydrophilic pores of around 1 nm and causes cardiac stimulation and cytolysis. Pore formation is a multi-step process that involves specific recognition of membrane sphingomyelin (but neither cholesterol nor phosphatidylcholine) using aromatic rich region and adjacent phosphocholine (POC) binding site, firm binding to the membrane (mainly driven by hydrophobic interactions) accompanied by the transfer of the N-terminal region to the lipid-water interface and finally pore formation after oligomerization of monomers. Cytolytic effects include red blood cells hemolysis, platelet aggregation and lysis, cytotoxic and cytostatic effects on fibroblasts. Lethality in mammals has been ascribed to severe vasospasm of coronary vessels, cardiac arrhythmia, and inotropic effects.</text>
</comment>
<comment type="subunit">
    <text evidence="1">Octamer or nonamer in membranes. Monomer in the soluble state.</text>
</comment>
<comment type="subcellular location">
    <subcellularLocation>
        <location evidence="1">Secreted</location>
    </subcellularLocation>
    <subcellularLocation>
        <location evidence="2">Nematocyst</location>
    </subcellularLocation>
    <subcellularLocation>
        <location evidence="1">Target cell membrane</location>
    </subcellularLocation>
    <text evidence="1">Forms an alpha-helical membrane channel in the prey.</text>
</comment>
<comment type="domain">
    <text evidence="3">Composed of a long N-terminal alpha-helix and a core region rich in beta-sheet structures. Before the pore formation, the alpha-helix binds the lipid membrane, partitions into the lipid-water interface and stabilizes the monomeric molecule on the membrane. Finally, it traverses the bilayer, thus forming the transmembrane pore.</text>
</comment>
<comment type="toxic dose">
    <text evidence="4">LD(50) is 83 ug/kg by intravenous injection into mice.</text>
</comment>
<comment type="similarity">
    <text evidence="6">Belongs to the actinoporin family. Sea anemone subfamily.</text>
</comment>
<evidence type="ECO:0000250" key="1">
    <source>
        <dbReference type="UniProtKB" id="B9W5G6"/>
    </source>
</evidence>
<evidence type="ECO:0000250" key="2">
    <source>
        <dbReference type="UniProtKB" id="P07845"/>
    </source>
</evidence>
<evidence type="ECO:0000250" key="3">
    <source>
        <dbReference type="UniProtKB" id="P61914"/>
    </source>
</evidence>
<evidence type="ECO:0000269" key="4">
    <source>
    </source>
</evidence>
<evidence type="ECO:0000303" key="5">
    <source>
    </source>
</evidence>
<evidence type="ECO:0000305" key="6"/>
<feature type="peptide" id="PRO_0000244625" description="Equinatoxin-3">
    <location>
        <begin position="1"/>
        <end position="20" status="greater than"/>
    </location>
</feature>
<feature type="region of interest" description="Plays an important role in the hemolytic activity" evidence="2">
    <location>
        <begin position="3"/>
        <end position="12"/>
    </location>
</feature>
<feature type="region of interest" description="N-terminal region" evidence="3">
    <location>
        <begin position="11"/>
        <end position="20" status="greater than"/>
    </location>
</feature>
<feature type="non-terminal residue">
    <location>
        <position position="20"/>
    </location>
</feature>
<dbReference type="GO" id="GO:0005576">
    <property type="term" value="C:extracellular region"/>
    <property type="evidence" value="ECO:0007669"/>
    <property type="project" value="UniProtKB-SubCell"/>
</dbReference>
<dbReference type="GO" id="GO:0016020">
    <property type="term" value="C:membrane"/>
    <property type="evidence" value="ECO:0007669"/>
    <property type="project" value="UniProtKB-KW"/>
</dbReference>
<dbReference type="GO" id="GO:0042151">
    <property type="term" value="C:nematocyst"/>
    <property type="evidence" value="ECO:0007669"/>
    <property type="project" value="UniProtKB-SubCell"/>
</dbReference>
<dbReference type="GO" id="GO:0044218">
    <property type="term" value="C:other organism cell membrane"/>
    <property type="evidence" value="ECO:0007669"/>
    <property type="project" value="UniProtKB-KW"/>
</dbReference>
<dbReference type="GO" id="GO:0090729">
    <property type="term" value="F:toxin activity"/>
    <property type="evidence" value="ECO:0007669"/>
    <property type="project" value="UniProtKB-KW"/>
</dbReference>
<dbReference type="GO" id="GO:0031640">
    <property type="term" value="P:killing of cells of another organism"/>
    <property type="evidence" value="ECO:0007669"/>
    <property type="project" value="UniProtKB-KW"/>
</dbReference>
<dbReference type="GO" id="GO:0006811">
    <property type="term" value="P:monoatomic ion transport"/>
    <property type="evidence" value="ECO:0007669"/>
    <property type="project" value="UniProtKB-KW"/>
</dbReference>
<keyword id="KW-0204">Cytolysis</keyword>
<keyword id="KW-0903">Direct protein sequencing</keyword>
<keyword id="KW-0406">Ion transport</keyword>
<keyword id="KW-0472">Membrane</keyword>
<keyword id="KW-0166">Nematocyst</keyword>
<keyword id="KW-0964">Secreted</keyword>
<keyword id="KW-1052">Target cell membrane</keyword>
<keyword id="KW-1053">Target membrane</keyword>
<keyword id="KW-0800">Toxin</keyword>
<keyword id="KW-0812">Transmembrane</keyword>
<keyword id="KW-0813">Transport</keyword>
<accession>P0C1H2</accession>
<protein>
    <recommendedName>
        <fullName evidence="6">Equinatoxin-3</fullName>
    </recommendedName>
    <alternativeName>
        <fullName evidence="6">DELTA-actitoxin</fullName>
    </alternativeName>
    <alternativeName>
        <fullName evidence="5">Equinatoxin III</fullName>
        <shortName evidence="5">EqT III</shortName>
        <shortName>EqT-III</shortName>
        <shortName evidence="5">EqTIII</shortName>
    </alternativeName>
</protein>
<sequence>SVAVAGAIIKGAALTFNVLQ</sequence>
<reference key="1">
    <citation type="journal article" date="1999" name="Toxicon">
        <title>Equinatoxins, pore-forming proteins from the sea anemone Actinia equina, belong to a multigene family.</title>
        <authorList>
            <person name="Anderluh G."/>
            <person name="Krizaj I."/>
            <person name="Strukelj B."/>
            <person name="Gubensek F."/>
            <person name="Macek P."/>
            <person name="Pungercar J."/>
        </authorList>
    </citation>
    <scope>PROTEIN SEQUENCE</scope>
</reference>
<reference key="2">
    <citation type="journal article" date="1988" name="Toxicon">
        <title>Isolation and characterization of three lethal and hemolytic toxins from the sea anemone Actinia equina L.</title>
        <authorList>
            <person name="Macek P."/>
            <person name="Lebez D."/>
        </authorList>
    </citation>
    <scope>AMINO-ACID COMPOSITION</scope>
    <scope>TOXIC DOSE</scope>
</reference>
<reference key="3">
    <citation type="journal article" date="2009" name="Toxicon">
        <title>Molecular mechanism of pore formation by actinoporins.</title>
        <authorList>
            <person name="Kristan K.C."/>
            <person name="Viero G."/>
            <person name="Dalla Serra M."/>
            <person name="Macek P."/>
            <person name="Anderluh G."/>
        </authorList>
    </citation>
    <scope>REVIEW</scope>
</reference>